<feature type="chain" id="PRO_0000304823" description="UPF0473 protein CPE1618">
    <location>
        <begin position="1"/>
        <end position="85"/>
    </location>
</feature>
<dbReference type="EMBL" id="BA000016">
    <property type="protein sequence ID" value="BAB81324.1"/>
    <property type="molecule type" value="Genomic_DNA"/>
</dbReference>
<dbReference type="RefSeq" id="WP_003449706.1">
    <property type="nucleotide sequence ID" value="NC_003366.1"/>
</dbReference>
<dbReference type="STRING" id="195102.gene:10490882"/>
<dbReference type="KEGG" id="cpe:CPE1618"/>
<dbReference type="HOGENOM" id="CLU_146610_8_0_9"/>
<dbReference type="Proteomes" id="UP000000818">
    <property type="component" value="Chromosome"/>
</dbReference>
<dbReference type="HAMAP" id="MF_01448">
    <property type="entry name" value="UPF0473"/>
    <property type="match status" value="1"/>
</dbReference>
<dbReference type="InterPro" id="IPR009711">
    <property type="entry name" value="UPF0473"/>
</dbReference>
<dbReference type="NCBIfam" id="NF010218">
    <property type="entry name" value="PRK13678.2-1"/>
    <property type="match status" value="1"/>
</dbReference>
<dbReference type="Pfam" id="PF06949">
    <property type="entry name" value="DUF1292"/>
    <property type="match status" value="1"/>
</dbReference>
<organism>
    <name type="scientific">Clostridium perfringens (strain 13 / Type A)</name>
    <dbReference type="NCBI Taxonomy" id="195102"/>
    <lineage>
        <taxon>Bacteria</taxon>
        <taxon>Bacillati</taxon>
        <taxon>Bacillota</taxon>
        <taxon>Clostridia</taxon>
        <taxon>Eubacteriales</taxon>
        <taxon>Clostridiaceae</taxon>
        <taxon>Clostridium</taxon>
    </lineage>
</organism>
<evidence type="ECO:0000255" key="1">
    <source>
        <dbReference type="HAMAP-Rule" id="MF_01448"/>
    </source>
</evidence>
<accession>Q8XJY5</accession>
<comment type="similarity">
    <text evidence="1">Belongs to the UPF0473 family.</text>
</comment>
<protein>
    <recommendedName>
        <fullName evidence="1">UPF0473 protein CPE1618</fullName>
    </recommendedName>
</protein>
<gene>
    <name type="ordered locus">CPE1618</name>
</gene>
<keyword id="KW-1185">Reference proteome</keyword>
<sequence length="85" mass="10088">MEEKQIMAFRDEEGNKVEFEVVAKIYLGEKNKKEYIVLSPVEGNGDEADDFVFRVDKVNDSVEYNLVEDDEEFRLVKKEYKKLLY</sequence>
<proteinExistence type="inferred from homology"/>
<reference key="1">
    <citation type="journal article" date="2002" name="Proc. Natl. Acad. Sci. U.S.A.">
        <title>Complete genome sequence of Clostridium perfringens, an anaerobic flesh-eater.</title>
        <authorList>
            <person name="Shimizu T."/>
            <person name="Ohtani K."/>
            <person name="Hirakawa H."/>
            <person name="Ohshima K."/>
            <person name="Yamashita A."/>
            <person name="Shiba T."/>
            <person name="Ogasawara N."/>
            <person name="Hattori M."/>
            <person name="Kuhara S."/>
            <person name="Hayashi H."/>
        </authorList>
    </citation>
    <scope>NUCLEOTIDE SEQUENCE [LARGE SCALE GENOMIC DNA]</scope>
    <source>
        <strain>13 / Type A</strain>
    </source>
</reference>
<name>Y1618_CLOPE</name>